<protein>
    <recommendedName>
        <fullName>Delta-hemolysin</fullName>
        <shortName>Delta-lysin</shortName>
    </recommendedName>
    <alternativeName>
        <fullName>Delta-toxin</fullName>
    </alternativeName>
</protein>
<reference key="1">
    <citation type="journal article" date="2005" name="J. Bacteriol.">
        <title>Insights on evolution of virulence and resistance from the complete genome analysis of an early methicillin-resistant Staphylococcus aureus strain and a biofilm-producing methicillin-resistant Staphylococcus epidermidis strain.</title>
        <authorList>
            <person name="Gill S.R."/>
            <person name="Fouts D.E."/>
            <person name="Archer G.L."/>
            <person name="Mongodin E.F."/>
            <person name="DeBoy R.T."/>
            <person name="Ravel J."/>
            <person name="Paulsen I.T."/>
            <person name="Kolonay J.F."/>
            <person name="Brinkac L.M."/>
            <person name="Beanan M.J."/>
            <person name="Dodson R.J."/>
            <person name="Daugherty S.C."/>
            <person name="Madupu R."/>
            <person name="Angiuoli S.V."/>
            <person name="Durkin A.S."/>
            <person name="Haft D.H."/>
            <person name="Vamathevan J.J."/>
            <person name="Khouri H."/>
            <person name="Utterback T.R."/>
            <person name="Lee C."/>
            <person name="Dimitrov G."/>
            <person name="Jiang L."/>
            <person name="Qin H."/>
            <person name="Weidman J."/>
            <person name="Tran K."/>
            <person name="Kang K.H."/>
            <person name="Hance I.R."/>
            <person name="Nelson K.E."/>
            <person name="Fraser C.M."/>
        </authorList>
    </citation>
    <scope>NUCLEOTIDE SEQUENCE [LARGE SCALE GENOMIC DNA]</scope>
    <source>
        <strain>COL</strain>
    </source>
</reference>
<accession>Q5HEG6</accession>
<keyword id="KW-0204">Cytolysis</keyword>
<keyword id="KW-0291">Formylation</keyword>
<keyword id="KW-0354">Hemolysis</keyword>
<keyword id="KW-1032">Host cell membrane</keyword>
<keyword id="KW-1043">Host membrane</keyword>
<keyword id="KW-0472">Membrane</keyword>
<keyword id="KW-0964">Secreted</keyword>
<keyword id="KW-0800">Toxin</keyword>
<keyword id="KW-0812">Transmembrane</keyword>
<keyword id="KW-0843">Virulence</keyword>
<organism>
    <name type="scientific">Staphylococcus aureus (strain COL)</name>
    <dbReference type="NCBI Taxonomy" id="93062"/>
    <lineage>
        <taxon>Bacteria</taxon>
        <taxon>Bacillati</taxon>
        <taxon>Bacillota</taxon>
        <taxon>Bacilli</taxon>
        <taxon>Bacillales</taxon>
        <taxon>Staphylococcaceae</taxon>
        <taxon>Staphylococcus</taxon>
    </lineage>
</organism>
<proteinExistence type="inferred from homology"/>
<sequence length="26" mass="2979">MAQDIISTIGDLVKWIIDTVNKFTKK</sequence>
<feature type="peptide" id="PRO_0000045207" description="Delta-hemolysin">
    <location>
        <begin position="1"/>
        <end position="26"/>
    </location>
</feature>
<feature type="modified residue" description="N-formylmethionine" evidence="1">
    <location>
        <position position="1"/>
    </location>
</feature>
<gene>
    <name type="primary">hld</name>
    <name type="ordered locus">SACOL2022</name>
</gene>
<name>HLD_STAAC</name>
<dbReference type="EMBL" id="CP000046">
    <property type="protein sequence ID" value="AAW36987.1"/>
    <property type="status" value="ALT_INIT"/>
    <property type="molecule type" value="Genomic_DNA"/>
</dbReference>
<dbReference type="BMRB" id="Q5HEG6"/>
<dbReference type="SMR" id="Q5HEG6"/>
<dbReference type="KEGG" id="sac:SACOL2022"/>
<dbReference type="HOGENOM" id="CLU_3222291_0_0_9"/>
<dbReference type="Proteomes" id="UP000000530">
    <property type="component" value="Chromosome"/>
</dbReference>
<dbReference type="GO" id="GO:0005576">
    <property type="term" value="C:extracellular region"/>
    <property type="evidence" value="ECO:0007669"/>
    <property type="project" value="UniProtKB-SubCell"/>
</dbReference>
<dbReference type="GO" id="GO:0020002">
    <property type="term" value="C:host cell plasma membrane"/>
    <property type="evidence" value="ECO:0007669"/>
    <property type="project" value="UniProtKB-SubCell"/>
</dbReference>
<dbReference type="GO" id="GO:0016020">
    <property type="term" value="C:membrane"/>
    <property type="evidence" value="ECO:0007669"/>
    <property type="project" value="UniProtKB-KW"/>
</dbReference>
<dbReference type="GO" id="GO:0090729">
    <property type="term" value="F:toxin activity"/>
    <property type="evidence" value="ECO:0007669"/>
    <property type="project" value="UniProtKB-KW"/>
</dbReference>
<dbReference type="GO" id="GO:0019836">
    <property type="term" value="P:symbiont-mediated hemolysis of host erythrocyte"/>
    <property type="evidence" value="ECO:0007669"/>
    <property type="project" value="InterPro"/>
</dbReference>
<dbReference type="InterPro" id="IPR008034">
    <property type="entry name" value="Delta_lysin"/>
</dbReference>
<dbReference type="NCBIfam" id="NF011336">
    <property type="entry name" value="PRK14752.1-1"/>
    <property type="match status" value="1"/>
</dbReference>
<dbReference type="NCBIfam" id="NF011338">
    <property type="entry name" value="PRK14752.1-4"/>
    <property type="match status" value="1"/>
</dbReference>
<dbReference type="Pfam" id="PF05372">
    <property type="entry name" value="Delta_lysin"/>
    <property type="match status" value="1"/>
</dbReference>
<comment type="function">
    <text evidence="1">Lyses erythrocytes and many other mammalian cells.</text>
</comment>
<comment type="subcellular location">
    <subcellularLocation>
        <location evidence="1">Secreted</location>
    </subcellularLocation>
    <subcellularLocation>
        <location evidence="1">Host cell membrane</location>
    </subcellularLocation>
    <text evidence="1">In infected cells, it is found in the membrane.</text>
</comment>
<comment type="similarity">
    <text evidence="2">Belongs to the delta-lysin family.</text>
</comment>
<comment type="sequence caution" evidence="2">
    <conflict type="erroneous initiation">
        <sequence resource="EMBL-CDS" id="AAW36987"/>
    </conflict>
</comment>
<evidence type="ECO:0000250" key="1"/>
<evidence type="ECO:0000305" key="2"/>